<comment type="function">
    <text evidence="1">One of the primary rRNA binding proteins. Required for association of the 30S and 50S subunits to form the 70S ribosome, for tRNA binding and peptide bond formation. It has been suggested to have peptidyltransferase activity; this is somewhat controversial. Makes several contacts with the 16S rRNA in the 70S ribosome.</text>
</comment>
<comment type="subunit">
    <text evidence="1">Part of the 50S ribosomal subunit. Forms a bridge to the 30S subunit in the 70S ribosome.</text>
</comment>
<comment type="similarity">
    <text evidence="1">Belongs to the universal ribosomal protein uL2 family.</text>
</comment>
<protein>
    <recommendedName>
        <fullName evidence="1">Large ribosomal subunit protein uL2</fullName>
    </recommendedName>
    <alternativeName>
        <fullName evidence="3">50S ribosomal protein L2</fullName>
    </alternativeName>
</protein>
<name>RL2_SYNS9</name>
<proteinExistence type="inferred from homology"/>
<keyword id="KW-1185">Reference proteome</keyword>
<keyword id="KW-0687">Ribonucleoprotein</keyword>
<keyword id="KW-0689">Ribosomal protein</keyword>
<keyword id="KW-0694">RNA-binding</keyword>
<keyword id="KW-0699">rRNA-binding</keyword>
<gene>
    <name evidence="1" type="primary">rplB</name>
    <name evidence="1" type="synonym">rpl2</name>
    <name type="ordered locus">Syncc9902_1958</name>
</gene>
<sequence>MAIRKFRPYTPGTRTRVVTDFSEVTGRKPEKTLVVSKHRKKGRNNRGVITCRHRGGGHKRLYRLVDFRRNKHGVTAKVAAIHYDPHRNARLALLFYSDGEKRYILAPAGVQVGQTVVSGPEVPIENGNAMPLSSVPLGSSVHCVELYAGRGGQMVRTAGASAQVMAKEGDYVALKLPSTEVRLVRRECYATLGEVGNSEVRNTSLGKAGRRRWLGRRPQVRGSVMNPCDHPHGGGEGRAPIGRSGPVTPWGKPALGLKTRKRNKPSNQYVLRKRRKTSKRSRGGRDS</sequence>
<reference key="1">
    <citation type="submission" date="2005-08" db="EMBL/GenBank/DDBJ databases">
        <title>Complete sequence of Synechococcus sp. CC9902.</title>
        <authorList>
            <person name="Copeland A."/>
            <person name="Lucas S."/>
            <person name="Lapidus A."/>
            <person name="Barry K."/>
            <person name="Detter J.C."/>
            <person name="Glavina T."/>
            <person name="Hammon N."/>
            <person name="Israni S."/>
            <person name="Pitluck S."/>
            <person name="Martinez M."/>
            <person name="Schmutz J."/>
            <person name="Larimer F."/>
            <person name="Land M."/>
            <person name="Kyrpides N."/>
            <person name="Ivanova N."/>
            <person name="Richardson P."/>
        </authorList>
    </citation>
    <scope>NUCLEOTIDE SEQUENCE [LARGE SCALE GENOMIC DNA]</scope>
    <source>
        <strain>CC9902</strain>
    </source>
</reference>
<feature type="chain" id="PRO_0000237253" description="Large ribosomal subunit protein uL2">
    <location>
        <begin position="1"/>
        <end position="287"/>
    </location>
</feature>
<feature type="region of interest" description="Disordered" evidence="2">
    <location>
        <begin position="221"/>
        <end position="287"/>
    </location>
</feature>
<feature type="compositionally biased region" description="Basic residues" evidence="2">
    <location>
        <begin position="271"/>
        <end position="287"/>
    </location>
</feature>
<dbReference type="EMBL" id="CP000097">
    <property type="protein sequence ID" value="ABB26916.1"/>
    <property type="molecule type" value="Genomic_DNA"/>
</dbReference>
<dbReference type="RefSeq" id="WP_011360716.1">
    <property type="nucleotide sequence ID" value="NC_007513.1"/>
</dbReference>
<dbReference type="SMR" id="Q3AUW0"/>
<dbReference type="STRING" id="316279.Syncc9902_1958"/>
<dbReference type="KEGG" id="sye:Syncc9902_1958"/>
<dbReference type="eggNOG" id="COG0090">
    <property type="taxonomic scope" value="Bacteria"/>
</dbReference>
<dbReference type="HOGENOM" id="CLU_036235_2_1_3"/>
<dbReference type="OrthoDB" id="9778722at2"/>
<dbReference type="Proteomes" id="UP000002712">
    <property type="component" value="Chromosome"/>
</dbReference>
<dbReference type="GO" id="GO:0015934">
    <property type="term" value="C:large ribosomal subunit"/>
    <property type="evidence" value="ECO:0007669"/>
    <property type="project" value="InterPro"/>
</dbReference>
<dbReference type="GO" id="GO:0019843">
    <property type="term" value="F:rRNA binding"/>
    <property type="evidence" value="ECO:0007669"/>
    <property type="project" value="UniProtKB-UniRule"/>
</dbReference>
<dbReference type="GO" id="GO:0003735">
    <property type="term" value="F:structural constituent of ribosome"/>
    <property type="evidence" value="ECO:0007669"/>
    <property type="project" value="InterPro"/>
</dbReference>
<dbReference type="GO" id="GO:0016740">
    <property type="term" value="F:transferase activity"/>
    <property type="evidence" value="ECO:0007669"/>
    <property type="project" value="InterPro"/>
</dbReference>
<dbReference type="GO" id="GO:0006412">
    <property type="term" value="P:translation"/>
    <property type="evidence" value="ECO:0007669"/>
    <property type="project" value="UniProtKB-UniRule"/>
</dbReference>
<dbReference type="FunFam" id="2.30.30.30:FF:000001">
    <property type="entry name" value="50S ribosomal protein L2"/>
    <property type="match status" value="1"/>
</dbReference>
<dbReference type="FunFam" id="2.40.50.140:FF:000003">
    <property type="entry name" value="50S ribosomal protein L2"/>
    <property type="match status" value="1"/>
</dbReference>
<dbReference type="FunFam" id="4.10.950.10:FF:000001">
    <property type="entry name" value="50S ribosomal protein L2"/>
    <property type="match status" value="1"/>
</dbReference>
<dbReference type="Gene3D" id="2.30.30.30">
    <property type="match status" value="1"/>
</dbReference>
<dbReference type="Gene3D" id="2.40.50.140">
    <property type="entry name" value="Nucleic acid-binding proteins"/>
    <property type="match status" value="1"/>
</dbReference>
<dbReference type="Gene3D" id="4.10.950.10">
    <property type="entry name" value="Ribosomal protein L2, domain 3"/>
    <property type="match status" value="1"/>
</dbReference>
<dbReference type="HAMAP" id="MF_01320_B">
    <property type="entry name" value="Ribosomal_uL2_B"/>
    <property type="match status" value="1"/>
</dbReference>
<dbReference type="InterPro" id="IPR012340">
    <property type="entry name" value="NA-bd_OB-fold"/>
</dbReference>
<dbReference type="InterPro" id="IPR014722">
    <property type="entry name" value="Rib_uL2_dom2"/>
</dbReference>
<dbReference type="InterPro" id="IPR002171">
    <property type="entry name" value="Ribosomal_uL2"/>
</dbReference>
<dbReference type="InterPro" id="IPR005880">
    <property type="entry name" value="Ribosomal_uL2_bac/org-type"/>
</dbReference>
<dbReference type="InterPro" id="IPR022669">
    <property type="entry name" value="Ribosomal_uL2_C"/>
</dbReference>
<dbReference type="InterPro" id="IPR022671">
    <property type="entry name" value="Ribosomal_uL2_CS"/>
</dbReference>
<dbReference type="InterPro" id="IPR014726">
    <property type="entry name" value="Ribosomal_uL2_dom3"/>
</dbReference>
<dbReference type="InterPro" id="IPR022666">
    <property type="entry name" value="Ribosomal_uL2_RNA-bd_dom"/>
</dbReference>
<dbReference type="InterPro" id="IPR008991">
    <property type="entry name" value="Translation_prot_SH3-like_sf"/>
</dbReference>
<dbReference type="NCBIfam" id="TIGR01171">
    <property type="entry name" value="rplB_bact"/>
    <property type="match status" value="1"/>
</dbReference>
<dbReference type="PANTHER" id="PTHR13691:SF5">
    <property type="entry name" value="LARGE RIBOSOMAL SUBUNIT PROTEIN UL2M"/>
    <property type="match status" value="1"/>
</dbReference>
<dbReference type="PANTHER" id="PTHR13691">
    <property type="entry name" value="RIBOSOMAL PROTEIN L2"/>
    <property type="match status" value="1"/>
</dbReference>
<dbReference type="Pfam" id="PF00181">
    <property type="entry name" value="Ribosomal_L2"/>
    <property type="match status" value="1"/>
</dbReference>
<dbReference type="Pfam" id="PF03947">
    <property type="entry name" value="Ribosomal_L2_C"/>
    <property type="match status" value="1"/>
</dbReference>
<dbReference type="PIRSF" id="PIRSF002158">
    <property type="entry name" value="Ribosomal_L2"/>
    <property type="match status" value="1"/>
</dbReference>
<dbReference type="SMART" id="SM01383">
    <property type="entry name" value="Ribosomal_L2"/>
    <property type="match status" value="1"/>
</dbReference>
<dbReference type="SMART" id="SM01382">
    <property type="entry name" value="Ribosomal_L2_C"/>
    <property type="match status" value="1"/>
</dbReference>
<dbReference type="SUPFAM" id="SSF50249">
    <property type="entry name" value="Nucleic acid-binding proteins"/>
    <property type="match status" value="1"/>
</dbReference>
<dbReference type="SUPFAM" id="SSF50104">
    <property type="entry name" value="Translation proteins SH3-like domain"/>
    <property type="match status" value="1"/>
</dbReference>
<dbReference type="PROSITE" id="PS00467">
    <property type="entry name" value="RIBOSOMAL_L2"/>
    <property type="match status" value="1"/>
</dbReference>
<evidence type="ECO:0000255" key="1">
    <source>
        <dbReference type="HAMAP-Rule" id="MF_01320"/>
    </source>
</evidence>
<evidence type="ECO:0000256" key="2">
    <source>
        <dbReference type="SAM" id="MobiDB-lite"/>
    </source>
</evidence>
<evidence type="ECO:0000305" key="3"/>
<organism>
    <name type="scientific">Synechococcus sp. (strain CC9902)</name>
    <dbReference type="NCBI Taxonomy" id="316279"/>
    <lineage>
        <taxon>Bacteria</taxon>
        <taxon>Bacillati</taxon>
        <taxon>Cyanobacteriota</taxon>
        <taxon>Cyanophyceae</taxon>
        <taxon>Synechococcales</taxon>
        <taxon>Synechococcaceae</taxon>
        <taxon>Synechococcus</taxon>
    </lineage>
</organism>
<accession>Q3AUW0</accession>